<name>LLDD_YERP3</name>
<feature type="chain" id="PRO_1000068996" description="L-lactate dehydrogenase">
    <location>
        <begin position="1"/>
        <end position="381"/>
    </location>
</feature>
<feature type="domain" description="FMN hydroxy acid dehydrogenase" evidence="1">
    <location>
        <begin position="1"/>
        <end position="380"/>
    </location>
</feature>
<feature type="active site" description="Proton acceptor" evidence="1">
    <location>
        <position position="275"/>
    </location>
</feature>
<feature type="binding site" evidence="1">
    <location>
        <position position="24"/>
    </location>
    <ligand>
        <name>substrate</name>
    </ligand>
</feature>
<feature type="binding site" evidence="1">
    <location>
        <position position="106"/>
    </location>
    <ligand>
        <name>FMN</name>
        <dbReference type="ChEBI" id="CHEBI:58210"/>
    </ligand>
</feature>
<feature type="binding site" evidence="1">
    <location>
        <position position="127"/>
    </location>
    <ligand>
        <name>FMN</name>
        <dbReference type="ChEBI" id="CHEBI:58210"/>
    </ligand>
</feature>
<feature type="binding site" evidence="1">
    <location>
        <position position="129"/>
    </location>
    <ligand>
        <name>substrate</name>
    </ligand>
</feature>
<feature type="binding site" evidence="1">
    <location>
        <position position="155"/>
    </location>
    <ligand>
        <name>FMN</name>
        <dbReference type="ChEBI" id="CHEBI:58210"/>
    </ligand>
</feature>
<feature type="binding site" evidence="1">
    <location>
        <position position="164"/>
    </location>
    <ligand>
        <name>substrate</name>
    </ligand>
</feature>
<feature type="binding site" evidence="1">
    <location>
        <position position="251"/>
    </location>
    <ligand>
        <name>FMN</name>
        <dbReference type="ChEBI" id="CHEBI:58210"/>
    </ligand>
</feature>
<feature type="binding site" evidence="1">
    <location>
        <position position="278"/>
    </location>
    <ligand>
        <name>substrate</name>
    </ligand>
</feature>
<feature type="binding site" evidence="1">
    <location>
        <begin position="306"/>
        <end position="330"/>
    </location>
    <ligand>
        <name>FMN</name>
        <dbReference type="ChEBI" id="CHEBI:58210"/>
    </ligand>
</feature>
<sequence length="381" mass="41259">MIISASTDYRAAAQRKLPPFLFHYIDGGAYNEQTLRRNTADLADIALRQRVLKNMSELSLETQLFGETQAMPVVLGPVGLSGMYARRGEVQAARAADKKGIPFTLSTLSVCPIEEVAPAIARPMWFQLYVLKDRGFMRNALTRAQAAGVKTLVFTVDMPVPGARYRDAHSGMSGPNAAARRLLQAIAHPQWAWDVGLNGKPHDLGNISAYLGKPTTLEDYMGWIATNFDPSISWKDLEWVREFWQGPMIIKGILDPEDAKDAVKFGADGIVVSNHGGRQLDGVLSTARALPAIADAVKGDITILADSGIRTGLDVVRMIALGADSVLLGRAFVYALATAGEAGVINLLTLIEQEMRVAMTLTGAKRIADINRDSLAVSERG</sequence>
<evidence type="ECO:0000255" key="1">
    <source>
        <dbReference type="HAMAP-Rule" id="MF_01559"/>
    </source>
</evidence>
<comment type="function">
    <text evidence="1">Catalyzes the conversion of L-lactate to pyruvate. Is coupled to the respiratory chain.</text>
</comment>
<comment type="catalytic activity">
    <reaction evidence="1">
        <text>(S)-lactate + A = pyruvate + AH2</text>
        <dbReference type="Rhea" id="RHEA:45816"/>
        <dbReference type="ChEBI" id="CHEBI:13193"/>
        <dbReference type="ChEBI" id="CHEBI:15361"/>
        <dbReference type="ChEBI" id="CHEBI:16651"/>
        <dbReference type="ChEBI" id="CHEBI:17499"/>
    </reaction>
</comment>
<comment type="cofactor">
    <cofactor evidence="1">
        <name>FMN</name>
        <dbReference type="ChEBI" id="CHEBI:58210"/>
    </cofactor>
</comment>
<comment type="subcellular location">
    <subcellularLocation>
        <location evidence="1">Cell inner membrane</location>
        <topology evidence="1">Peripheral membrane protein</topology>
    </subcellularLocation>
</comment>
<comment type="similarity">
    <text evidence="1">Belongs to the FMN-dependent alpha-hydroxy acid dehydrogenase family.</text>
</comment>
<organism>
    <name type="scientific">Yersinia pseudotuberculosis serotype O:1b (strain IP 31758)</name>
    <dbReference type="NCBI Taxonomy" id="349747"/>
    <lineage>
        <taxon>Bacteria</taxon>
        <taxon>Pseudomonadati</taxon>
        <taxon>Pseudomonadota</taxon>
        <taxon>Gammaproteobacteria</taxon>
        <taxon>Enterobacterales</taxon>
        <taxon>Yersiniaceae</taxon>
        <taxon>Yersinia</taxon>
    </lineage>
</organism>
<proteinExistence type="inferred from homology"/>
<dbReference type="EC" id="1.1.-.-" evidence="1"/>
<dbReference type="EMBL" id="CP000720">
    <property type="protein sequence ID" value="ABS49556.1"/>
    <property type="molecule type" value="Genomic_DNA"/>
</dbReference>
<dbReference type="RefSeq" id="WP_002211919.1">
    <property type="nucleotide sequence ID" value="NC_009708.1"/>
</dbReference>
<dbReference type="SMR" id="A7FJF0"/>
<dbReference type="GeneID" id="57977002"/>
<dbReference type="KEGG" id="ypi:YpsIP31758_2409"/>
<dbReference type="HOGENOM" id="CLU_020639_0_0_6"/>
<dbReference type="Proteomes" id="UP000002412">
    <property type="component" value="Chromosome"/>
</dbReference>
<dbReference type="GO" id="GO:0005886">
    <property type="term" value="C:plasma membrane"/>
    <property type="evidence" value="ECO:0007669"/>
    <property type="project" value="UniProtKB-SubCell"/>
</dbReference>
<dbReference type="GO" id="GO:0010181">
    <property type="term" value="F:FMN binding"/>
    <property type="evidence" value="ECO:0007669"/>
    <property type="project" value="InterPro"/>
</dbReference>
<dbReference type="GO" id="GO:0004459">
    <property type="term" value="F:L-lactate dehydrogenase activity"/>
    <property type="evidence" value="ECO:0007669"/>
    <property type="project" value="UniProtKB-UniRule"/>
</dbReference>
<dbReference type="GO" id="GO:0009060">
    <property type="term" value="P:aerobic respiration"/>
    <property type="evidence" value="ECO:0007669"/>
    <property type="project" value="TreeGrafter"/>
</dbReference>
<dbReference type="GO" id="GO:0006089">
    <property type="term" value="P:lactate metabolic process"/>
    <property type="evidence" value="ECO:0007669"/>
    <property type="project" value="UniProtKB-UniRule"/>
</dbReference>
<dbReference type="CDD" id="cd02809">
    <property type="entry name" value="alpha_hydroxyacid_oxid_FMN"/>
    <property type="match status" value="1"/>
</dbReference>
<dbReference type="FunFam" id="3.20.20.70:FF:000029">
    <property type="entry name" value="L-lactate dehydrogenase"/>
    <property type="match status" value="1"/>
</dbReference>
<dbReference type="Gene3D" id="3.20.20.70">
    <property type="entry name" value="Aldolase class I"/>
    <property type="match status" value="1"/>
</dbReference>
<dbReference type="HAMAP" id="MF_01559">
    <property type="entry name" value="L_lact_dehydr"/>
    <property type="match status" value="1"/>
</dbReference>
<dbReference type="InterPro" id="IPR013785">
    <property type="entry name" value="Aldolase_TIM"/>
</dbReference>
<dbReference type="InterPro" id="IPR012133">
    <property type="entry name" value="Alpha-hydoxy_acid_DH_FMN"/>
</dbReference>
<dbReference type="InterPro" id="IPR000262">
    <property type="entry name" value="FMN-dep_DH"/>
</dbReference>
<dbReference type="InterPro" id="IPR037396">
    <property type="entry name" value="FMN_HAD"/>
</dbReference>
<dbReference type="InterPro" id="IPR008259">
    <property type="entry name" value="FMN_hydac_DH_AS"/>
</dbReference>
<dbReference type="InterPro" id="IPR020920">
    <property type="entry name" value="LldD"/>
</dbReference>
<dbReference type="NCBIfam" id="NF033901">
    <property type="entry name" value="L_lactate_LldD"/>
    <property type="match status" value="1"/>
</dbReference>
<dbReference type="NCBIfam" id="NF008398">
    <property type="entry name" value="PRK11197.1"/>
    <property type="match status" value="1"/>
</dbReference>
<dbReference type="PANTHER" id="PTHR10578:SF85">
    <property type="entry name" value="L-LACTATE DEHYDROGENASE"/>
    <property type="match status" value="1"/>
</dbReference>
<dbReference type="PANTHER" id="PTHR10578">
    <property type="entry name" value="S -2-HYDROXY-ACID OXIDASE-RELATED"/>
    <property type="match status" value="1"/>
</dbReference>
<dbReference type="Pfam" id="PF01070">
    <property type="entry name" value="FMN_dh"/>
    <property type="match status" value="1"/>
</dbReference>
<dbReference type="PIRSF" id="PIRSF000138">
    <property type="entry name" value="Al-hdrx_acd_dh"/>
    <property type="match status" value="1"/>
</dbReference>
<dbReference type="SUPFAM" id="SSF51395">
    <property type="entry name" value="FMN-linked oxidoreductases"/>
    <property type="match status" value="1"/>
</dbReference>
<dbReference type="PROSITE" id="PS00557">
    <property type="entry name" value="FMN_HYDROXY_ACID_DH_1"/>
    <property type="match status" value="1"/>
</dbReference>
<dbReference type="PROSITE" id="PS51349">
    <property type="entry name" value="FMN_HYDROXY_ACID_DH_2"/>
    <property type="match status" value="1"/>
</dbReference>
<reference key="1">
    <citation type="journal article" date="2007" name="PLoS Genet.">
        <title>The complete genome sequence of Yersinia pseudotuberculosis IP31758, the causative agent of Far East scarlet-like fever.</title>
        <authorList>
            <person name="Eppinger M."/>
            <person name="Rosovitz M.J."/>
            <person name="Fricke W.F."/>
            <person name="Rasko D.A."/>
            <person name="Kokorina G."/>
            <person name="Fayolle C."/>
            <person name="Lindler L.E."/>
            <person name="Carniel E."/>
            <person name="Ravel J."/>
        </authorList>
    </citation>
    <scope>NUCLEOTIDE SEQUENCE [LARGE SCALE GENOMIC DNA]</scope>
    <source>
        <strain>IP 31758</strain>
    </source>
</reference>
<gene>
    <name evidence="1" type="primary">lldD</name>
    <name type="ordered locus">YpsIP31758_2409</name>
</gene>
<protein>
    <recommendedName>
        <fullName evidence="1">L-lactate dehydrogenase</fullName>
        <ecNumber evidence="1">1.1.-.-</ecNumber>
    </recommendedName>
</protein>
<keyword id="KW-0997">Cell inner membrane</keyword>
<keyword id="KW-1003">Cell membrane</keyword>
<keyword id="KW-0285">Flavoprotein</keyword>
<keyword id="KW-0288">FMN</keyword>
<keyword id="KW-0472">Membrane</keyword>
<keyword id="KW-0560">Oxidoreductase</keyword>
<accession>A7FJF0</accession>